<name>ATP6_CERS5</name>
<proteinExistence type="inferred from homology"/>
<dbReference type="EMBL" id="CP000661">
    <property type="protein sequence ID" value="ABP69100.1"/>
    <property type="molecule type" value="Genomic_DNA"/>
</dbReference>
<dbReference type="SMR" id="A4WNY6"/>
<dbReference type="STRING" id="349102.Rsph17025_0190"/>
<dbReference type="KEGG" id="rsq:Rsph17025_0190"/>
<dbReference type="eggNOG" id="COG0356">
    <property type="taxonomic scope" value="Bacteria"/>
</dbReference>
<dbReference type="HOGENOM" id="CLU_041018_0_2_5"/>
<dbReference type="BioCyc" id="RSPH349102:G1G8M-195-MONOMER"/>
<dbReference type="GO" id="GO:0005886">
    <property type="term" value="C:plasma membrane"/>
    <property type="evidence" value="ECO:0007669"/>
    <property type="project" value="UniProtKB-SubCell"/>
</dbReference>
<dbReference type="GO" id="GO:0045259">
    <property type="term" value="C:proton-transporting ATP synthase complex"/>
    <property type="evidence" value="ECO:0007669"/>
    <property type="project" value="UniProtKB-KW"/>
</dbReference>
<dbReference type="GO" id="GO:0046933">
    <property type="term" value="F:proton-transporting ATP synthase activity, rotational mechanism"/>
    <property type="evidence" value="ECO:0007669"/>
    <property type="project" value="UniProtKB-UniRule"/>
</dbReference>
<dbReference type="CDD" id="cd00310">
    <property type="entry name" value="ATP-synt_Fo_a_6"/>
    <property type="match status" value="1"/>
</dbReference>
<dbReference type="Gene3D" id="1.20.120.220">
    <property type="entry name" value="ATP synthase, F0 complex, subunit A"/>
    <property type="match status" value="1"/>
</dbReference>
<dbReference type="HAMAP" id="MF_01393">
    <property type="entry name" value="ATP_synth_a_bact"/>
    <property type="match status" value="1"/>
</dbReference>
<dbReference type="InterPro" id="IPR000568">
    <property type="entry name" value="ATP_synth_F0_asu"/>
</dbReference>
<dbReference type="InterPro" id="IPR023011">
    <property type="entry name" value="ATP_synth_F0_asu_AS"/>
</dbReference>
<dbReference type="InterPro" id="IPR045083">
    <property type="entry name" value="ATP_synth_F0_asu_bact/mt"/>
</dbReference>
<dbReference type="InterPro" id="IPR035908">
    <property type="entry name" value="F0_ATP_A_sf"/>
</dbReference>
<dbReference type="NCBIfam" id="TIGR01131">
    <property type="entry name" value="ATP_synt_6_or_A"/>
    <property type="match status" value="1"/>
</dbReference>
<dbReference type="NCBIfam" id="NF004482">
    <property type="entry name" value="PRK05815.2-4"/>
    <property type="match status" value="1"/>
</dbReference>
<dbReference type="PANTHER" id="PTHR11410">
    <property type="entry name" value="ATP SYNTHASE SUBUNIT A"/>
    <property type="match status" value="1"/>
</dbReference>
<dbReference type="PANTHER" id="PTHR11410:SF0">
    <property type="entry name" value="ATP SYNTHASE SUBUNIT A"/>
    <property type="match status" value="1"/>
</dbReference>
<dbReference type="Pfam" id="PF00119">
    <property type="entry name" value="ATP-synt_A"/>
    <property type="match status" value="1"/>
</dbReference>
<dbReference type="PRINTS" id="PR00123">
    <property type="entry name" value="ATPASEA"/>
</dbReference>
<dbReference type="SUPFAM" id="SSF81336">
    <property type="entry name" value="F1F0 ATP synthase subunit A"/>
    <property type="match status" value="1"/>
</dbReference>
<dbReference type="PROSITE" id="PS00449">
    <property type="entry name" value="ATPASE_A"/>
    <property type="match status" value="1"/>
</dbReference>
<sequence>METEVEHTGLAIHPMDQFIVRKLFCHTESASPMNECTTNIHWYDITNVTMWMAIAVLVIAAILVLGTRRRAIVPSRSQSVAELLYGFIHNMVEEVTGHEGVKYFPYVMTLFLFVLCGNVLGLLPLSFTTTSHMAVTVPLALMVFVGVTALGFMRNGPGFLKMFWVTSAPLAIRPVLAVIEVISYFVRPVSHSIRLAGNMMAGHAVIKVIAGFASIAVVSPVVVGAVTAIYALELLVAVVQAYVFTILTCVYLRDAVGDAHH</sequence>
<evidence type="ECO:0000255" key="1">
    <source>
        <dbReference type="HAMAP-Rule" id="MF_01393"/>
    </source>
</evidence>
<accession>A4WNY6</accession>
<reference key="1">
    <citation type="submission" date="2007-04" db="EMBL/GenBank/DDBJ databases">
        <title>Complete sequence of chromosome of Rhodobacter sphaeroides ATCC 17025.</title>
        <authorList>
            <consortium name="US DOE Joint Genome Institute"/>
            <person name="Copeland A."/>
            <person name="Lucas S."/>
            <person name="Lapidus A."/>
            <person name="Barry K."/>
            <person name="Detter J.C."/>
            <person name="Glavina del Rio T."/>
            <person name="Hammon N."/>
            <person name="Israni S."/>
            <person name="Dalin E."/>
            <person name="Tice H."/>
            <person name="Pitluck S."/>
            <person name="Chertkov O."/>
            <person name="Brettin T."/>
            <person name="Bruce D."/>
            <person name="Han C."/>
            <person name="Schmutz J."/>
            <person name="Larimer F."/>
            <person name="Land M."/>
            <person name="Hauser L."/>
            <person name="Kyrpides N."/>
            <person name="Kim E."/>
            <person name="Richardson P."/>
            <person name="Mackenzie C."/>
            <person name="Choudhary M."/>
            <person name="Donohue T.J."/>
            <person name="Kaplan S."/>
        </authorList>
    </citation>
    <scope>NUCLEOTIDE SEQUENCE [LARGE SCALE GENOMIC DNA]</scope>
    <source>
        <strain>ATCC 17025 / ATH 2.4.3</strain>
    </source>
</reference>
<comment type="function">
    <text evidence="1">Key component of the proton channel; it plays a direct role in the translocation of protons across the membrane.</text>
</comment>
<comment type="subunit">
    <text evidence="1">F-type ATPases have 2 components, CF(1) - the catalytic core - and CF(0) - the membrane proton channel. CF(1) has five subunits: alpha(3), beta(3), gamma(1), delta(1), epsilon(1). CF(0) has four main subunits: a, b, b' and c.</text>
</comment>
<comment type="subcellular location">
    <subcellularLocation>
        <location evidence="1">Cell inner membrane</location>
        <topology evidence="1">Multi-pass membrane protein</topology>
    </subcellularLocation>
</comment>
<comment type="similarity">
    <text evidence="1">Belongs to the ATPase A chain family.</text>
</comment>
<keyword id="KW-0066">ATP synthesis</keyword>
<keyword id="KW-0997">Cell inner membrane</keyword>
<keyword id="KW-1003">Cell membrane</keyword>
<keyword id="KW-0138">CF(0)</keyword>
<keyword id="KW-0375">Hydrogen ion transport</keyword>
<keyword id="KW-0406">Ion transport</keyword>
<keyword id="KW-0472">Membrane</keyword>
<keyword id="KW-0812">Transmembrane</keyword>
<keyword id="KW-1133">Transmembrane helix</keyword>
<keyword id="KW-0813">Transport</keyword>
<gene>
    <name evidence="1" type="primary">atpB</name>
    <name type="ordered locus">Rsph17025_0190</name>
</gene>
<organism>
    <name type="scientific">Cereibacter sphaeroides (strain ATCC 17025 / ATH 2.4.3)</name>
    <name type="common">Rhodobacter sphaeroides</name>
    <dbReference type="NCBI Taxonomy" id="349102"/>
    <lineage>
        <taxon>Bacteria</taxon>
        <taxon>Pseudomonadati</taxon>
        <taxon>Pseudomonadota</taxon>
        <taxon>Alphaproteobacteria</taxon>
        <taxon>Rhodobacterales</taxon>
        <taxon>Paracoccaceae</taxon>
        <taxon>Cereibacter</taxon>
    </lineage>
</organism>
<protein>
    <recommendedName>
        <fullName evidence="1">ATP synthase subunit a</fullName>
    </recommendedName>
    <alternativeName>
        <fullName evidence="1">ATP synthase F0 sector subunit a</fullName>
    </alternativeName>
    <alternativeName>
        <fullName evidence="1">F-ATPase subunit 6</fullName>
    </alternativeName>
</protein>
<feature type="chain" id="PRO_0000362414" description="ATP synthase subunit a">
    <location>
        <begin position="1"/>
        <end position="261"/>
    </location>
</feature>
<feature type="transmembrane region" description="Helical" evidence="1">
    <location>
        <begin position="45"/>
        <end position="65"/>
    </location>
</feature>
<feature type="transmembrane region" description="Helical" evidence="1">
    <location>
        <begin position="107"/>
        <end position="127"/>
    </location>
</feature>
<feature type="transmembrane region" description="Helical" evidence="1">
    <location>
        <begin position="133"/>
        <end position="153"/>
    </location>
</feature>
<feature type="transmembrane region" description="Helical" evidence="1">
    <location>
        <begin position="162"/>
        <end position="182"/>
    </location>
</feature>
<feature type="transmembrane region" description="Helical" evidence="1">
    <location>
        <begin position="209"/>
        <end position="229"/>
    </location>
</feature>
<feature type="transmembrane region" description="Helical" evidence="1">
    <location>
        <begin position="232"/>
        <end position="252"/>
    </location>
</feature>